<proteinExistence type="inferred from homology"/>
<organism>
    <name type="scientific">Engelmannia peristenia</name>
    <name type="common">Engelmann's daisy</name>
    <name type="synonym">Engelmannia pinnatifida</name>
    <dbReference type="NCBI Taxonomy" id="53580"/>
    <lineage>
        <taxon>Eukaryota</taxon>
        <taxon>Viridiplantae</taxon>
        <taxon>Streptophyta</taxon>
        <taxon>Embryophyta</taxon>
        <taxon>Tracheophyta</taxon>
        <taxon>Spermatophyta</taxon>
        <taxon>Magnoliopsida</taxon>
        <taxon>eudicotyledons</taxon>
        <taxon>Gunneridae</taxon>
        <taxon>Pentapetalae</taxon>
        <taxon>asterids</taxon>
        <taxon>campanulids</taxon>
        <taxon>Asterales</taxon>
        <taxon>Asteraceae</taxon>
        <taxon>Asteroideae</taxon>
        <taxon>Heliantheae alliance</taxon>
        <taxon>Heliantheae</taxon>
        <taxon>Engelmannia</taxon>
    </lineage>
</organism>
<reference key="1">
    <citation type="submission" date="2003-01" db="EMBL/GenBank/DDBJ databases">
        <title>Chloroplast DNA phylogeny of tribe Heliantheae (Asteraceae).</title>
        <authorList>
            <person name="Panero J.L."/>
            <person name="Baldwin B.G."/>
            <person name="Schilling E.E."/>
            <person name="Clevinger J.A."/>
        </authorList>
    </citation>
    <scope>NUCLEOTIDE SEQUENCE [GENOMIC DNA]</scope>
</reference>
<geneLocation type="chloroplast"/>
<protein>
    <recommendedName>
        <fullName evidence="1">NAD(P)H-quinone oxidoreductase subunit I, chloroplastic</fullName>
        <ecNumber evidence="1">7.1.1.-</ecNumber>
    </recommendedName>
    <alternativeName>
        <fullName evidence="1">NAD(P)H dehydrogenase subunit I</fullName>
        <shortName evidence="1">NDH subunit I</shortName>
    </alternativeName>
    <alternativeName>
        <fullName evidence="1">NADH-plastoquinone oxidoreductase subunit I</fullName>
    </alternativeName>
</protein>
<name>NDHI_ENGPE</name>
<keyword id="KW-0004">4Fe-4S</keyword>
<keyword id="KW-0150">Chloroplast</keyword>
<keyword id="KW-0408">Iron</keyword>
<keyword id="KW-0411">Iron-sulfur</keyword>
<keyword id="KW-0472">Membrane</keyword>
<keyword id="KW-0479">Metal-binding</keyword>
<keyword id="KW-0520">NAD</keyword>
<keyword id="KW-0521">NADP</keyword>
<keyword id="KW-0934">Plastid</keyword>
<keyword id="KW-0618">Plastoquinone</keyword>
<keyword id="KW-0874">Quinone</keyword>
<keyword id="KW-0677">Repeat</keyword>
<keyword id="KW-0793">Thylakoid</keyword>
<keyword id="KW-1278">Translocase</keyword>
<gene>
    <name evidence="1" type="primary">ndhI</name>
</gene>
<evidence type="ECO:0000255" key="1">
    <source>
        <dbReference type="HAMAP-Rule" id="MF_01351"/>
    </source>
</evidence>
<dbReference type="EC" id="7.1.1.-" evidence="1"/>
<dbReference type="EMBL" id="AF383782">
    <property type="protein sequence ID" value="AAN61723.1"/>
    <property type="molecule type" value="Genomic_DNA"/>
</dbReference>
<dbReference type="SMR" id="Q8HVT1"/>
<dbReference type="GO" id="GO:0009535">
    <property type="term" value="C:chloroplast thylakoid membrane"/>
    <property type="evidence" value="ECO:0007669"/>
    <property type="project" value="UniProtKB-SubCell"/>
</dbReference>
<dbReference type="GO" id="GO:0051539">
    <property type="term" value="F:4 iron, 4 sulfur cluster binding"/>
    <property type="evidence" value="ECO:0007669"/>
    <property type="project" value="UniProtKB-KW"/>
</dbReference>
<dbReference type="GO" id="GO:0005506">
    <property type="term" value="F:iron ion binding"/>
    <property type="evidence" value="ECO:0007669"/>
    <property type="project" value="UniProtKB-UniRule"/>
</dbReference>
<dbReference type="GO" id="GO:0008137">
    <property type="term" value="F:NADH dehydrogenase (ubiquinone) activity"/>
    <property type="evidence" value="ECO:0007669"/>
    <property type="project" value="InterPro"/>
</dbReference>
<dbReference type="GO" id="GO:0048038">
    <property type="term" value="F:quinone binding"/>
    <property type="evidence" value="ECO:0007669"/>
    <property type="project" value="UniProtKB-KW"/>
</dbReference>
<dbReference type="GO" id="GO:0019684">
    <property type="term" value="P:photosynthesis, light reaction"/>
    <property type="evidence" value="ECO:0007669"/>
    <property type="project" value="UniProtKB-UniRule"/>
</dbReference>
<dbReference type="FunFam" id="3.30.70.3270:FF:000006">
    <property type="entry name" value="NAD(P)H-quinone oxidoreductase subunit I, chloroplastic"/>
    <property type="match status" value="1"/>
</dbReference>
<dbReference type="Gene3D" id="3.30.70.3270">
    <property type="match status" value="1"/>
</dbReference>
<dbReference type="HAMAP" id="MF_01351">
    <property type="entry name" value="NDH1_NuoI"/>
    <property type="match status" value="1"/>
</dbReference>
<dbReference type="InterPro" id="IPR017896">
    <property type="entry name" value="4Fe4S_Fe-S-bd"/>
</dbReference>
<dbReference type="InterPro" id="IPR017900">
    <property type="entry name" value="4Fe4S_Fe_S_CS"/>
</dbReference>
<dbReference type="InterPro" id="IPR010226">
    <property type="entry name" value="NADH_quinone_OxRdtase_chainI"/>
</dbReference>
<dbReference type="InterPro" id="IPR004497">
    <property type="entry name" value="NDHI"/>
</dbReference>
<dbReference type="NCBIfam" id="TIGR00403">
    <property type="entry name" value="ndhI"/>
    <property type="match status" value="1"/>
</dbReference>
<dbReference type="NCBIfam" id="TIGR01971">
    <property type="entry name" value="NuoI"/>
    <property type="match status" value="1"/>
</dbReference>
<dbReference type="NCBIfam" id="NF004537">
    <property type="entry name" value="PRK05888.1-3"/>
    <property type="match status" value="1"/>
</dbReference>
<dbReference type="PANTHER" id="PTHR47275">
    <property type="entry name" value="NAD(P)H-QUINONE OXIDOREDUCTASE SUBUNIT I, CHLOROPLASTIC"/>
    <property type="match status" value="1"/>
</dbReference>
<dbReference type="PANTHER" id="PTHR47275:SF1">
    <property type="entry name" value="NAD(P)H-QUINONE OXIDOREDUCTASE SUBUNIT I, CHLOROPLASTIC"/>
    <property type="match status" value="1"/>
</dbReference>
<dbReference type="Pfam" id="PF00037">
    <property type="entry name" value="Fer4"/>
    <property type="match status" value="2"/>
</dbReference>
<dbReference type="SUPFAM" id="SSF54862">
    <property type="entry name" value="4Fe-4S ferredoxins"/>
    <property type="match status" value="1"/>
</dbReference>
<dbReference type="PROSITE" id="PS00198">
    <property type="entry name" value="4FE4S_FER_1"/>
    <property type="match status" value="2"/>
</dbReference>
<dbReference type="PROSITE" id="PS51379">
    <property type="entry name" value="4FE4S_FER_2"/>
    <property type="match status" value="2"/>
</dbReference>
<feature type="chain" id="PRO_0000250784" description="NAD(P)H-quinone oxidoreductase subunit I, chloroplastic">
    <location>
        <begin position="1"/>
        <end position="166"/>
    </location>
</feature>
<feature type="domain" description="4Fe-4S ferredoxin-type 1" evidence="1">
    <location>
        <begin position="55"/>
        <end position="84"/>
    </location>
</feature>
<feature type="domain" description="4Fe-4S ferredoxin-type 2" evidence="1">
    <location>
        <begin position="95"/>
        <end position="124"/>
    </location>
</feature>
<feature type="binding site" evidence="1">
    <location>
        <position position="64"/>
    </location>
    <ligand>
        <name>[4Fe-4S] cluster</name>
        <dbReference type="ChEBI" id="CHEBI:49883"/>
        <label>1</label>
    </ligand>
</feature>
<feature type="binding site" evidence="1">
    <location>
        <position position="67"/>
    </location>
    <ligand>
        <name>[4Fe-4S] cluster</name>
        <dbReference type="ChEBI" id="CHEBI:49883"/>
        <label>1</label>
    </ligand>
</feature>
<feature type="binding site" evidence="1">
    <location>
        <position position="70"/>
    </location>
    <ligand>
        <name>[4Fe-4S] cluster</name>
        <dbReference type="ChEBI" id="CHEBI:49883"/>
        <label>1</label>
    </ligand>
</feature>
<feature type="binding site" evidence="1">
    <location>
        <position position="74"/>
    </location>
    <ligand>
        <name>[4Fe-4S] cluster</name>
        <dbReference type="ChEBI" id="CHEBI:49883"/>
        <label>2</label>
    </ligand>
</feature>
<feature type="binding site" evidence="1">
    <location>
        <position position="104"/>
    </location>
    <ligand>
        <name>[4Fe-4S] cluster</name>
        <dbReference type="ChEBI" id="CHEBI:49883"/>
        <label>2</label>
    </ligand>
</feature>
<feature type="binding site" evidence="1">
    <location>
        <position position="107"/>
    </location>
    <ligand>
        <name>[4Fe-4S] cluster</name>
        <dbReference type="ChEBI" id="CHEBI:49883"/>
        <label>2</label>
    </ligand>
</feature>
<feature type="binding site" evidence="1">
    <location>
        <position position="110"/>
    </location>
    <ligand>
        <name>[4Fe-4S] cluster</name>
        <dbReference type="ChEBI" id="CHEBI:49883"/>
        <label>2</label>
    </ligand>
</feature>
<feature type="binding site" evidence="1">
    <location>
        <position position="114"/>
    </location>
    <ligand>
        <name>[4Fe-4S] cluster</name>
        <dbReference type="ChEBI" id="CHEBI:49883"/>
        <label>1</label>
    </ligand>
</feature>
<sequence>MFPMVTEFMNYGQQTVRAARYIGQGFMITLSHANRLPVTIQYPYEKLITSERFRGRIHFEFDKCIACEVCVRVCPIDLPVVDWKLETDIRKKRLLNYSIDFGICIFCGNCVEYCPTNCLSMTEEYELSTYDRHELNYNQIALGRLPMSIIDDYTIRTIFNLPEIKT</sequence>
<accession>Q8HVT1</accession>
<comment type="function">
    <text evidence="1">NDH shuttles electrons from NAD(P)H:plastoquinone, via FMN and iron-sulfur (Fe-S) centers, to quinones in the photosynthetic chain and possibly in a chloroplast respiratory chain. The immediate electron acceptor for the enzyme in this species is believed to be plastoquinone. Couples the redox reaction to proton translocation, and thus conserves the redox energy in a proton gradient.</text>
</comment>
<comment type="catalytic activity">
    <reaction evidence="1">
        <text>a plastoquinone + NADH + (n+1) H(+)(in) = a plastoquinol + NAD(+) + n H(+)(out)</text>
        <dbReference type="Rhea" id="RHEA:42608"/>
        <dbReference type="Rhea" id="RHEA-COMP:9561"/>
        <dbReference type="Rhea" id="RHEA-COMP:9562"/>
        <dbReference type="ChEBI" id="CHEBI:15378"/>
        <dbReference type="ChEBI" id="CHEBI:17757"/>
        <dbReference type="ChEBI" id="CHEBI:57540"/>
        <dbReference type="ChEBI" id="CHEBI:57945"/>
        <dbReference type="ChEBI" id="CHEBI:62192"/>
    </reaction>
</comment>
<comment type="catalytic activity">
    <reaction evidence="1">
        <text>a plastoquinone + NADPH + (n+1) H(+)(in) = a plastoquinol + NADP(+) + n H(+)(out)</text>
        <dbReference type="Rhea" id="RHEA:42612"/>
        <dbReference type="Rhea" id="RHEA-COMP:9561"/>
        <dbReference type="Rhea" id="RHEA-COMP:9562"/>
        <dbReference type="ChEBI" id="CHEBI:15378"/>
        <dbReference type="ChEBI" id="CHEBI:17757"/>
        <dbReference type="ChEBI" id="CHEBI:57783"/>
        <dbReference type="ChEBI" id="CHEBI:58349"/>
        <dbReference type="ChEBI" id="CHEBI:62192"/>
    </reaction>
</comment>
<comment type="cofactor">
    <cofactor evidence="1">
        <name>[4Fe-4S] cluster</name>
        <dbReference type="ChEBI" id="CHEBI:49883"/>
    </cofactor>
    <text evidence="1">Binds 2 [4Fe-4S] clusters per subunit.</text>
</comment>
<comment type="subunit">
    <text evidence="1">NDH is composed of at least 16 different subunits, 5 of which are encoded in the nucleus.</text>
</comment>
<comment type="subcellular location">
    <subcellularLocation>
        <location evidence="1">Plastid</location>
        <location evidence="1">Chloroplast thylakoid membrane</location>
        <topology evidence="1">Peripheral membrane protein</topology>
    </subcellularLocation>
</comment>
<comment type="similarity">
    <text evidence="1">Belongs to the complex I 23 kDa subunit family.</text>
</comment>